<name>BGAL_RHIML</name>
<protein>
    <recommendedName>
        <fullName>Beta-galactosidase</fullName>
        <shortName>Beta-gal</shortName>
        <ecNumber>3.2.1.23</ecNumber>
    </recommendedName>
    <alternativeName>
        <fullName>Lactase</fullName>
    </alternativeName>
</protein>
<dbReference type="EC" id="3.2.1.23"/>
<dbReference type="EMBL" id="L20757">
    <property type="protein sequence ID" value="AAA26296.1"/>
    <property type="molecule type" value="Genomic_DNA"/>
</dbReference>
<dbReference type="SMR" id="Q59750"/>
<dbReference type="BindingDB" id="Q59750"/>
<dbReference type="ChEMBL" id="CHEMBL3484"/>
<dbReference type="DrugCentral" id="Q59750"/>
<dbReference type="CAZy" id="GH2">
    <property type="family name" value="Glycoside Hydrolase Family 2"/>
</dbReference>
<dbReference type="GO" id="GO:0004565">
    <property type="term" value="F:beta-galactosidase activity"/>
    <property type="evidence" value="ECO:0007669"/>
    <property type="project" value="UniProtKB-EC"/>
</dbReference>
<dbReference type="GO" id="GO:0005975">
    <property type="term" value="P:carbohydrate metabolic process"/>
    <property type="evidence" value="ECO:0007669"/>
    <property type="project" value="InterPro"/>
</dbReference>
<dbReference type="Gene3D" id="2.60.120.260">
    <property type="entry name" value="Galactose-binding domain-like"/>
    <property type="match status" value="1"/>
</dbReference>
<dbReference type="Gene3D" id="3.20.20.80">
    <property type="entry name" value="Glycosidases"/>
    <property type="match status" value="1"/>
</dbReference>
<dbReference type="Gene3D" id="2.60.40.10">
    <property type="entry name" value="Immunoglobulins"/>
    <property type="match status" value="1"/>
</dbReference>
<dbReference type="InterPro" id="IPR036156">
    <property type="entry name" value="Beta-gal/glucu_dom_sf"/>
</dbReference>
<dbReference type="InterPro" id="IPR008979">
    <property type="entry name" value="Galactose-bd-like_sf"/>
</dbReference>
<dbReference type="InterPro" id="IPR051913">
    <property type="entry name" value="GH2_Domain-Containing"/>
</dbReference>
<dbReference type="InterPro" id="IPR040605">
    <property type="entry name" value="Glyco_hydro2_dom5"/>
</dbReference>
<dbReference type="InterPro" id="IPR006103">
    <property type="entry name" value="Glyco_hydro_2_cat"/>
</dbReference>
<dbReference type="InterPro" id="IPR023230">
    <property type="entry name" value="Glyco_hydro_2_CS"/>
</dbReference>
<dbReference type="InterPro" id="IPR006102">
    <property type="entry name" value="Glyco_hydro_2_Ig-like"/>
</dbReference>
<dbReference type="InterPro" id="IPR017853">
    <property type="entry name" value="Glycoside_hydrolase_SF"/>
</dbReference>
<dbReference type="InterPro" id="IPR013783">
    <property type="entry name" value="Ig-like_fold"/>
</dbReference>
<dbReference type="PANTHER" id="PTHR42732">
    <property type="entry name" value="BETA-GALACTOSIDASE"/>
    <property type="match status" value="1"/>
</dbReference>
<dbReference type="PANTHER" id="PTHR42732:SF1">
    <property type="entry name" value="BETA-MANNOSIDASE"/>
    <property type="match status" value="1"/>
</dbReference>
<dbReference type="Pfam" id="PF18565">
    <property type="entry name" value="Glyco_hydro2_C5"/>
    <property type="match status" value="1"/>
</dbReference>
<dbReference type="Pfam" id="PF00703">
    <property type="entry name" value="Glyco_hydro_2"/>
    <property type="match status" value="1"/>
</dbReference>
<dbReference type="Pfam" id="PF02836">
    <property type="entry name" value="Glyco_hydro_2_C"/>
    <property type="match status" value="1"/>
</dbReference>
<dbReference type="SUPFAM" id="SSF51445">
    <property type="entry name" value="(Trans)glycosidases"/>
    <property type="match status" value="1"/>
</dbReference>
<dbReference type="SUPFAM" id="SSF49303">
    <property type="entry name" value="beta-Galactosidase/glucuronidase domain"/>
    <property type="match status" value="1"/>
</dbReference>
<dbReference type="SUPFAM" id="SSF49785">
    <property type="entry name" value="Galactose-binding domain-like"/>
    <property type="match status" value="1"/>
</dbReference>
<dbReference type="PROSITE" id="PS00719">
    <property type="entry name" value="GLYCOSYL_HYDROL_F2_1"/>
    <property type="match status" value="1"/>
</dbReference>
<gene>
    <name type="primary">lacZ</name>
</gene>
<accession>Q59750</accession>
<proteinExistence type="evidence at protein level"/>
<feature type="chain" id="PRO_0000057674" description="Beta-galactosidase">
    <location>
        <begin position="1"/>
        <end position="755"/>
    </location>
</feature>
<feature type="active site" description="Proton donor" evidence="1">
    <location>
        <position position="382"/>
    </location>
</feature>
<feature type="active site" description="Nucleophile" evidence="1">
    <location>
        <position position="463"/>
    </location>
</feature>
<organism>
    <name type="scientific">Rhizobium meliloti</name>
    <name type="common">Ensifer meliloti</name>
    <name type="synonym">Sinorhizobium meliloti</name>
    <dbReference type="NCBI Taxonomy" id="382"/>
    <lineage>
        <taxon>Bacteria</taxon>
        <taxon>Pseudomonadati</taxon>
        <taxon>Pseudomonadota</taxon>
        <taxon>Alphaproteobacteria</taxon>
        <taxon>Hyphomicrobiales</taxon>
        <taxon>Rhizobiaceae</taxon>
        <taxon>Sinorhizobium/Ensifer group</taxon>
        <taxon>Sinorhizobium</taxon>
    </lineage>
</organism>
<comment type="catalytic activity">
    <reaction>
        <text>Hydrolysis of terminal non-reducing beta-D-galactose residues in beta-D-galactosides.</text>
        <dbReference type="EC" id="3.2.1.23"/>
    </reaction>
</comment>
<comment type="similarity">
    <text evidence="2">Belongs to the glycosyl hydrolase 2 family.</text>
</comment>
<sequence>MRSVTSFNDSWVFSEASTRDAERSGRVSRSACRTNAVELPFNYFDERCYQRAFTYQRVLAWRPDFSQGSRSSSTRQWPMRSCISTAKRSSRIRDGYTPFEARLTDRLLEGDNLITVKIDGSENPEIPPFGAGIDYLTYAGIYRDVWLKVTDPVSIANIKIETRDVLSDHKAVSLRCDLSNPQGLSFSGTISALLKNAAGEVLAEVAGETTGQSLAFEMDGLRGLSLWDIDDPVLYVIEVELRTGQGFRLLRRAFRLPHGEFTTEGFRLNGRPLKIRGLNRHQSFPYVGLRMGRTAKGSAHADIMNAHRLHCNLVRTSHYPQSKWFLDHCDRIGLLVFARNPRLAAYRWGGMETGGNPERPPHRSSATGTTRLSYIWGVRINESQDSHDFYAETNRLARELDPTRQTGGVRYITDSEFLEDVYTMNDFILGNEELPGANRPGTALRPQQECTGLPRKVPYLITEFGGHMYPTKIYDQEQRQAEHVRRHLEVLNAAYARNPGISGAIGWCMFDYNTTRISAPATGSAITASWTCSASPKFAAYVYASQCDPSEEIVMKPVTFWARGDDDIGGVLPLIVLTNCDEIELKYGSLTKRVGPDRENFPHLPHPPVVIDHRHFTKDELGVWGMKWESAEFTGFIAGKPVADLRMAADPVPTTLQVEADSKTLRREGRDTVRLILRALDQAGNVLPFLNDAVDIEIHGPARLVGPARIVLQGGSGFLAGVHGRRRHASSRSRRRGSAAAKLDLVALADGAASA</sequence>
<keyword id="KW-0903">Direct protein sequencing</keyword>
<keyword id="KW-0326">Glycosidase</keyword>
<keyword id="KW-0378">Hydrolase</keyword>
<reference key="1">
    <citation type="journal article" date="1994" name="Gene">
        <title>Nucleotide and deduced amino acid sequences of Rhizobium meliloti 102F34 lacZ gene: comparison with prokaryotic beta-galactosidases and human beta-glucuronidase.</title>
        <authorList>
            <person name="Fanning S."/>
            <person name="Leahy M."/>
            <person name="Sheehan D."/>
        </authorList>
    </citation>
    <scope>NUCLEOTIDE SEQUENCE [GENOMIC DNA]</scope>
    <scope>PARTIAL PROTEIN SEQUENCE</scope>
    <source>
        <strain>102F34</strain>
    </source>
</reference>
<evidence type="ECO:0000250" key="1"/>
<evidence type="ECO:0000305" key="2"/>